<comment type="function">
    <text evidence="3 4 5">During host cell infection by tachyzoites, does not play a role in tethering the parasitophorous vacuole to the host mitochondria, probably because it does not bind host mitochondrial import protein TOMM70.</text>
</comment>
<comment type="subunit">
    <text evidence="4">Interacts with host SAMM50.</text>
</comment>
<comment type="subcellular location">
    <subcellularLocation>
        <location evidence="3">Parasitophorous vacuole membrane</location>
        <topology evidence="7">Single-pass type I membrane protein</topology>
    </subcellularLocation>
</comment>
<comment type="developmental stage">
    <text evidence="3">Expressed in tachyzoites (at protein level).</text>
</comment>
<comment type="polymorphism">
    <text evidence="3 4">The MAF1 locus encodes multiple tandemly duplicated paralogs that vary in expression, sequence and copy number across T.gondii strains (PubMed:26920761). For instance, type I strain GT1 has 6 copies, type I strain RH has 4 copies, type II strains ME49 and PRU have 4 copies, type III strain VEG has 4 copies and type III strain CTG has only 2 copies (PubMed:26920761). The paralogs are classified into two groups, a and b and have probably arisen from the neofunctionalization of an ancestral MAF1 a gene (PubMed:26920761). They are characterized by the presence or absence of a repetitive stretch of 4 to 7 prolines followed by a serine (P(4:7)S), as well as differences in the amino acids surrounding the proline motif (PubMed:26920761). This motif is either completely missing (a and b0 paralogs) or repeated up to six times (b paralogs) (PubMed:26920761). Across the strains, transcript levels for the a paralogs are similar, however, in type II strain ME49, transcript levels for the b paralogs are low and no paralog MAF1 b1 protein is produced (PubMed:26920761). Paralogs differ in their ability to mediate host mitochondrial association (HMA), but also in their ability to confer a selective advantage during infection in a mouse model (PubMed:26920761, PubMed:29505111). Tachyzoites from type I and III strains associate with host mitochondria (HMA(+)), while tachyzoites from type II strains, such as ME49, do not associate with host mitochondria (HMA(-)) due to a lack of MAF1 b1 expression (PubMed:26920761).</text>
</comment>
<name>MAFA1_TOXGO</name>
<organism>
    <name type="scientific">Toxoplasma gondii</name>
    <dbReference type="NCBI Taxonomy" id="5811"/>
    <lineage>
        <taxon>Eukaryota</taxon>
        <taxon>Sar</taxon>
        <taxon>Alveolata</taxon>
        <taxon>Apicomplexa</taxon>
        <taxon>Conoidasida</taxon>
        <taxon>Coccidia</taxon>
        <taxon>Eucoccidiorida</taxon>
        <taxon>Eimeriorina</taxon>
        <taxon>Sarcocystidae</taxon>
        <taxon>Toxoplasma</taxon>
    </lineage>
</organism>
<dbReference type="EMBL" id="KX255416">
    <property type="protein sequence ID" value="ANN02899.1"/>
    <property type="molecule type" value="mRNA"/>
</dbReference>
<dbReference type="EMBL" id="LT601556">
    <property type="protein sequence ID" value="SCA78655.1"/>
    <property type="molecule type" value="mRNA"/>
</dbReference>
<dbReference type="EMBL" id="JAAUHK010000187">
    <property type="protein sequence ID" value="KAF4645529.1"/>
    <property type="molecule type" value="Genomic_DNA"/>
</dbReference>
<dbReference type="PDB" id="6BXS">
    <property type="method" value="X-ray"/>
    <property type="resolution" value="2.10 A"/>
    <property type="chains" value="A/B/C=159-435"/>
</dbReference>
<dbReference type="PDB" id="6BXT">
    <property type="method" value="X-ray"/>
    <property type="resolution" value="2.70 A"/>
    <property type="chains" value="A/B/C=159-435"/>
</dbReference>
<dbReference type="PDBsum" id="6BXS"/>
<dbReference type="PDBsum" id="6BXT"/>
<dbReference type="SMR" id="A0A193AUK9"/>
<dbReference type="VEuPathDB" id="ToxoDB:TGARI_323100"/>
<dbReference type="VEuPathDB" id="ToxoDB:TGCAST_387150"/>
<dbReference type="VEuPathDB" id="ToxoDB:TGCAST_390500"/>
<dbReference type="VEuPathDB" id="ToxoDB:TGCOUG_394540"/>
<dbReference type="VEuPathDB" id="ToxoDB:TGCOUG_394550"/>
<dbReference type="VEuPathDB" id="ToxoDB:TGDOM2_323100"/>
<dbReference type="VEuPathDB" id="ToxoDB:TGDOM2_401920"/>
<dbReference type="VEuPathDB" id="ToxoDB:TGFOU_407650"/>
<dbReference type="VEuPathDB" id="ToxoDB:TGGT1_410370"/>
<dbReference type="VEuPathDB" id="ToxoDB:TGMAS_279100"/>
<dbReference type="VEuPathDB" id="ToxoDB:TGME49_279100"/>
<dbReference type="VEuPathDB" id="ToxoDB:TGP89_422200"/>
<dbReference type="VEuPathDB" id="ToxoDB:TGP89_422480"/>
<dbReference type="VEuPathDB" id="ToxoDB:TGPRC2_279100B"/>
<dbReference type="VEuPathDB" id="ToxoDB:TGRH88_000180"/>
<dbReference type="VEuPathDB" id="ToxoDB:TGRUB_433890"/>
<dbReference type="VEuPathDB" id="ToxoDB:TGVAND_437510"/>
<dbReference type="VEuPathDB" id="ToxoDB:TGVAND_437520"/>
<dbReference type="VEuPathDB" id="ToxoDB:TGVAND_439210"/>
<dbReference type="VEuPathDB" id="ToxoDB:TGVEG_279100"/>
<dbReference type="Proteomes" id="UP000557509">
    <property type="component" value="Unassembled WGS sequence"/>
</dbReference>
<dbReference type="GO" id="GO:0016020">
    <property type="term" value="C:membrane"/>
    <property type="evidence" value="ECO:0007669"/>
    <property type="project" value="UniProtKB-KW"/>
</dbReference>
<dbReference type="GO" id="GO:0020005">
    <property type="term" value="C:symbiont-containing vacuole membrane"/>
    <property type="evidence" value="ECO:0007669"/>
    <property type="project" value="UniProtKB-SubCell"/>
</dbReference>
<dbReference type="CDD" id="cd21101">
    <property type="entry name" value="MAF1-ALBA4_C"/>
    <property type="match status" value="1"/>
</dbReference>
<proteinExistence type="evidence at protein level"/>
<evidence type="ECO:0000255" key="1"/>
<evidence type="ECO:0000256" key="2">
    <source>
        <dbReference type="SAM" id="MobiDB-lite"/>
    </source>
</evidence>
<evidence type="ECO:0000269" key="3">
    <source>
    </source>
</evidence>
<evidence type="ECO:0000269" key="4">
    <source>
    </source>
</evidence>
<evidence type="ECO:0000269" key="5">
    <source>
    </source>
</evidence>
<evidence type="ECO:0000303" key="6">
    <source>
    </source>
</evidence>
<evidence type="ECO:0000305" key="7"/>
<evidence type="ECO:0000312" key="8">
    <source>
        <dbReference type="EMBL" id="ANN02899.1"/>
    </source>
</evidence>
<evidence type="ECO:0000312" key="9">
    <source>
        <dbReference type="EMBL" id="KAF4645529.1"/>
    </source>
</evidence>
<evidence type="ECO:0000312" key="10">
    <source>
        <dbReference type="EMBL" id="SCA78655.1"/>
    </source>
</evidence>
<evidence type="ECO:0007744" key="11">
    <source>
        <dbReference type="PDB" id="6BXS"/>
    </source>
</evidence>
<evidence type="ECO:0007744" key="12">
    <source>
        <dbReference type="PDB" id="6BXT"/>
    </source>
</evidence>
<evidence type="ECO:0007829" key="13">
    <source>
        <dbReference type="PDB" id="6BXS"/>
    </source>
</evidence>
<gene>
    <name evidence="6" type="primary">MAF1a1</name>
    <name evidence="6" type="synonym">MAF1</name>
    <name evidence="9" type="ORF">TGRH88_000160</name>
</gene>
<feature type="signal peptide" evidence="1">
    <location>
        <begin position="1"/>
        <end position="20"/>
    </location>
</feature>
<feature type="chain" id="PRO_5014534606" description="Mitochondrial association factor 1 form a1" evidence="1">
    <location>
        <begin position="21"/>
        <end position="435"/>
    </location>
</feature>
<feature type="topological domain" description="Vacuolar" evidence="7">
    <location>
        <begin position="21"/>
        <end position="95"/>
    </location>
</feature>
<feature type="transmembrane region" description="Helical" evidence="1">
    <location>
        <begin position="96"/>
        <end position="116"/>
    </location>
</feature>
<feature type="topological domain" description="Cytoplasmic" evidence="7">
    <location>
        <begin position="117"/>
        <end position="435"/>
    </location>
</feature>
<feature type="region of interest" description="Disordered" evidence="2">
    <location>
        <begin position="43"/>
        <end position="88"/>
    </location>
</feature>
<feature type="region of interest" description="Disordered" evidence="2">
    <location>
        <begin position="120"/>
        <end position="162"/>
    </location>
</feature>
<feature type="compositionally biased region" description="Basic and acidic residues" evidence="2">
    <location>
        <begin position="55"/>
        <end position="64"/>
    </location>
</feature>
<feature type="compositionally biased region" description="Low complexity" evidence="2">
    <location>
        <begin position="141"/>
        <end position="153"/>
    </location>
</feature>
<feature type="mutagenesis site" description="Does not confer host membrane association (HMA)." evidence="4">
    <original>RGLMESERKYKFPQGD</original>
    <variation>HGLQEAESTYLASMLD</variation>
    <location>
        <begin position="420"/>
        <end position="435"/>
    </location>
</feature>
<feature type="sequence conflict" description="In Ref. 2; KAF4645529." evidence="7" ref="2">
    <original>A</original>
    <variation>V</variation>
    <location>
        <position position="14"/>
    </location>
</feature>
<feature type="sequence conflict" description="In Ref. 2; KAF4645529." evidence="7" ref="2">
    <original>P</original>
    <variation>L</variation>
    <location>
        <position position="99"/>
    </location>
</feature>
<feature type="sequence conflict" description="In Ref. 2; KAF4645529." evidence="7" ref="2">
    <original>K</original>
    <variation>T</variation>
    <location>
        <position position="430"/>
    </location>
</feature>
<feature type="strand" evidence="13">
    <location>
        <begin position="162"/>
        <end position="167"/>
    </location>
</feature>
<feature type="turn" evidence="13">
    <location>
        <begin position="168"/>
        <end position="171"/>
    </location>
</feature>
<feature type="strand" evidence="13">
    <location>
        <begin position="172"/>
        <end position="178"/>
    </location>
</feature>
<feature type="helix" evidence="13">
    <location>
        <begin position="184"/>
        <end position="186"/>
    </location>
</feature>
<feature type="strand" evidence="13">
    <location>
        <begin position="199"/>
        <end position="204"/>
    </location>
</feature>
<feature type="helix" evidence="13">
    <location>
        <begin position="215"/>
        <end position="230"/>
    </location>
</feature>
<feature type="helix" evidence="13">
    <location>
        <begin position="237"/>
        <end position="257"/>
    </location>
</feature>
<feature type="strand" evidence="13">
    <location>
        <begin position="263"/>
        <end position="265"/>
    </location>
</feature>
<feature type="helix" evidence="13">
    <location>
        <begin position="267"/>
        <end position="269"/>
    </location>
</feature>
<feature type="strand" evidence="13">
    <location>
        <begin position="272"/>
        <end position="280"/>
    </location>
</feature>
<feature type="turn" evidence="13">
    <location>
        <begin position="285"/>
        <end position="287"/>
    </location>
</feature>
<feature type="helix" evidence="13">
    <location>
        <begin position="291"/>
        <end position="294"/>
    </location>
</feature>
<feature type="turn" evidence="13">
    <location>
        <begin position="296"/>
        <end position="299"/>
    </location>
</feature>
<feature type="strand" evidence="13">
    <location>
        <begin position="301"/>
        <end position="306"/>
    </location>
</feature>
<feature type="helix" evidence="13">
    <location>
        <begin position="308"/>
        <end position="310"/>
    </location>
</feature>
<feature type="helix" evidence="13">
    <location>
        <begin position="312"/>
        <end position="314"/>
    </location>
</feature>
<feature type="helix" evidence="13">
    <location>
        <begin position="316"/>
        <end position="318"/>
    </location>
</feature>
<feature type="strand" evidence="13">
    <location>
        <begin position="320"/>
        <end position="324"/>
    </location>
</feature>
<feature type="helix" evidence="13">
    <location>
        <begin position="333"/>
        <end position="356"/>
    </location>
</feature>
<feature type="helix" evidence="13">
    <location>
        <begin position="359"/>
        <end position="362"/>
    </location>
</feature>
<feature type="strand" evidence="13">
    <location>
        <begin position="367"/>
        <end position="370"/>
    </location>
</feature>
<feature type="helix" evidence="13">
    <location>
        <begin position="376"/>
        <end position="378"/>
    </location>
</feature>
<feature type="helix" evidence="13">
    <location>
        <begin position="384"/>
        <end position="402"/>
    </location>
</feature>
<feature type="strand" evidence="13">
    <location>
        <begin position="407"/>
        <end position="410"/>
    </location>
</feature>
<feature type="helix" evidence="13">
    <location>
        <begin position="417"/>
        <end position="430"/>
    </location>
</feature>
<reference evidence="8" key="1">
    <citation type="journal article" date="2016" name="Genetics">
        <title>Host Mitochondrial Association Evolved in the Human Parasite Toxoplasma gondii via Neofunctionalization of a Gene Duplicate.</title>
        <authorList>
            <person name="Adomako-Ankomah Y."/>
            <person name="English E.D."/>
            <person name="Danielson J.J."/>
            <person name="Pernas L.F."/>
            <person name="Parker M.L."/>
            <person name="Boulanger M.J."/>
            <person name="Dubey J.P."/>
            <person name="Boyle J.P."/>
        </authorList>
    </citation>
    <scope>NUCLEOTIDE SEQUENCE [MRNA]</scope>
    <scope>NOMENCLATURE</scope>
    <scope>FUNCTION</scope>
    <scope>SUBCELLULAR LOCATION</scope>
    <scope>DEVELOPMENTAL STAGE</scope>
    <scope>POLYMORPHISM</scope>
    <source>
        <strain evidence="10">RH</strain>
    </source>
</reference>
<reference key="2">
    <citation type="submission" date="2020-03" db="EMBL/GenBank/DDBJ databases">
        <title>Genome sequence of Toxoplasma gondii RH-88 strain.</title>
        <authorList>
            <person name="Lorenzi H.A."/>
            <person name="Venepally P."/>
            <person name="Rozenberg A."/>
            <person name="Sibley D."/>
        </authorList>
    </citation>
    <scope>NUCLEOTIDE SEQUENCE [LARGE SCALE GENOMIC DNA]</scope>
    <source>
        <strain>RH-88</strain>
    </source>
</reference>
<reference evidence="7" key="3">
    <citation type="journal article" date="2021" name="Proc. Natl. Acad. Sci. U.S.A.">
        <title>Toxoplasma gondii association with host mitochondria requires key mitochondrial protein import machinery.</title>
        <authorList>
            <person name="Blank M.L."/>
            <person name="Xia J."/>
            <person name="Morcos M.M."/>
            <person name="Sun M."/>
            <person name="Cantrell P.S."/>
            <person name="Liu Y."/>
            <person name="Zeng X."/>
            <person name="Powell C.J."/>
            <person name="Yates N."/>
            <person name="Boulanger M.J."/>
            <person name="Boyle J.P."/>
        </authorList>
    </citation>
    <scope>FUNCTION</scope>
</reference>
<reference evidence="11 12" key="4">
    <citation type="journal article" date="2018" name="Mol. Microbiol.">
        <title>A Toxoplasma gondii locus required for the direct manipulation of host mitochondria has maintained multiple ancestral functions.</title>
        <authorList>
            <person name="Blank M.L."/>
            <person name="Parker M.L."/>
            <person name="Ramaswamy R."/>
            <person name="Powell C.J."/>
            <person name="English E.D."/>
            <person name="Adomako-Ankomah Y."/>
            <person name="Pernas L.F."/>
            <person name="Workman S.D."/>
            <person name="Boothroyd J.C."/>
            <person name="Boulanger M.J."/>
            <person name="Boyle J.P."/>
        </authorList>
    </citation>
    <scope>X-RAY CRYSTALLOGRAPHY (2.10 ANGSTROMS) OF 159-435</scope>
    <scope>FUNCTION</scope>
    <scope>INTERACTION WITH HOST SAMM50</scope>
    <scope>POLYMORPHISM</scope>
    <scope>MUTAGENESIS OF 420-ARG--ASP-435</scope>
</reference>
<accession>A0A193AUK9</accession>
<accession>A0A7J6KFX2</accession>
<protein>
    <recommendedName>
        <fullName evidence="6">Mitochondrial association factor 1 form a1</fullName>
        <shortName evidence="6">MAF1RHa1 allele</shortName>
    </recommendedName>
    <alternativeName>
        <fullName evidence="6">MAF1a</fullName>
    </alternativeName>
</protein>
<sequence>MWRIWRCRLSFLFATGCLLGALTAGLGSQMSDSVGRNVQAPAGVADASQEAGDVVEERTERTEEQVFAPGPPRRHSSESLFPRNASVTARRRRNRRIAPIATAVGVAVILAALYVLRRRRAQPPQEPEPPTRLRTPRPRAPSEQQQPSESEPPAEVPMTPDPLTLRFTCLGDRNVIFFGPSGRQDGFTPLYDPSPSKRVATVDAGTYGLFIGGVGMNGEFADTIIEEARRNRIPLTATELSAESQEIQERLLHDAERQPGTLVEIDSGRFSRVFARSFAYVAIVPNTVWDESETGKNVGATFLHILKPEVTPHGNEMNDVMLYTVAPFGNASDSAYNMAYKATMLGIVGAVSEYNKTPWGEVKPVEAIRLPLLGAGHFRGRRGLHSIGRANAVAVEAAITRFDPRVELQFMYEPSDTALRGLMESERKYKFPQGD</sequence>
<keyword id="KW-0002">3D-structure</keyword>
<keyword id="KW-0472">Membrane</keyword>
<keyword id="KW-1185">Reference proteome</keyword>
<keyword id="KW-0732">Signal</keyword>
<keyword id="KW-1137">Tachyzoite</keyword>
<keyword id="KW-0812">Transmembrane</keyword>
<keyword id="KW-1133">Transmembrane helix</keyword>